<gene>
    <name evidence="1" type="primary">mepA</name>
    <name type="ordered locus">SPC_1322</name>
</gene>
<feature type="signal peptide" evidence="1">
    <location>
        <begin position="1"/>
        <end position="19"/>
    </location>
</feature>
<feature type="chain" id="PRO_1000186109" description="Penicillin-insensitive murein endopeptidase">
    <location>
        <begin position="20"/>
        <end position="274"/>
    </location>
</feature>
<feature type="region of interest" description="Disordered" evidence="2">
    <location>
        <begin position="225"/>
        <end position="274"/>
    </location>
</feature>
<feature type="binding site" evidence="1">
    <location>
        <position position="110"/>
    </location>
    <ligand>
        <name>Zn(2+)</name>
        <dbReference type="ChEBI" id="CHEBI:29105"/>
        <label>1</label>
    </ligand>
</feature>
<feature type="binding site" evidence="1">
    <location>
        <position position="113"/>
    </location>
    <ligand>
        <name>Zn(2+)</name>
        <dbReference type="ChEBI" id="CHEBI:29105"/>
        <label>1</label>
    </ligand>
</feature>
<feature type="binding site" evidence="1">
    <location>
        <position position="120"/>
    </location>
    <ligand>
        <name>Zn(2+)</name>
        <dbReference type="ChEBI" id="CHEBI:29105"/>
        <label>1</label>
    </ligand>
</feature>
<feature type="binding site" evidence="1">
    <location>
        <position position="147"/>
    </location>
    <ligand>
        <name>Zn(2+)</name>
        <dbReference type="ChEBI" id="CHEBI:29105"/>
        <label>2</label>
    </ligand>
</feature>
<feature type="binding site" evidence="1">
    <location>
        <position position="150"/>
    </location>
    <ligand>
        <name>Zn(2+)</name>
        <dbReference type="ChEBI" id="CHEBI:29105"/>
        <label>2</label>
    </ligand>
</feature>
<feature type="binding site" evidence="1">
    <location>
        <position position="211"/>
    </location>
    <ligand>
        <name>Zn(2+)</name>
        <dbReference type="ChEBI" id="CHEBI:29105"/>
        <label>1</label>
    </ligand>
</feature>
<feature type="disulfide bond" evidence="1">
    <location>
        <begin position="44"/>
        <end position="265"/>
    </location>
</feature>
<feature type="disulfide bond" evidence="1">
    <location>
        <begin position="187"/>
        <end position="235"/>
    </location>
</feature>
<feature type="disulfide bond" evidence="1">
    <location>
        <begin position="216"/>
        <end position="223"/>
    </location>
</feature>
<keyword id="KW-1015">Disulfide bond</keyword>
<keyword id="KW-0378">Hydrolase</keyword>
<keyword id="KW-0479">Metal-binding</keyword>
<keyword id="KW-0482">Metalloprotease</keyword>
<keyword id="KW-0574">Periplasm</keyword>
<keyword id="KW-0645">Protease</keyword>
<keyword id="KW-0732">Signal</keyword>
<keyword id="KW-0862">Zinc</keyword>
<organism>
    <name type="scientific">Salmonella paratyphi C (strain RKS4594)</name>
    <dbReference type="NCBI Taxonomy" id="476213"/>
    <lineage>
        <taxon>Bacteria</taxon>
        <taxon>Pseudomonadati</taxon>
        <taxon>Pseudomonadota</taxon>
        <taxon>Gammaproteobacteria</taxon>
        <taxon>Enterobacterales</taxon>
        <taxon>Enterobacteriaceae</taxon>
        <taxon>Salmonella</taxon>
    </lineage>
</organism>
<evidence type="ECO:0000255" key="1">
    <source>
        <dbReference type="HAMAP-Rule" id="MF_01623"/>
    </source>
</evidence>
<evidence type="ECO:0000256" key="2">
    <source>
        <dbReference type="SAM" id="MobiDB-lite"/>
    </source>
</evidence>
<comment type="function">
    <text evidence="1">Murein endopeptidase that cleaves the D-alanyl-meso-2,6-diamino-pimelyl amide bond that connects peptidoglycan strands. Likely plays a role in the removal of murein from the sacculus.</text>
</comment>
<comment type="cofactor">
    <cofactor evidence="1">
        <name>Zn(2+)</name>
        <dbReference type="ChEBI" id="CHEBI:29105"/>
    </cofactor>
    <text evidence="1">Binds 2 Zn(2+) ions per subunit. Zn(2+) ion 1 is bound in the active site. Zn(2+) ion 2 is bound at the dimer interface by residues from both subunits.</text>
</comment>
<comment type="subunit">
    <text evidence="1">Dimer.</text>
</comment>
<comment type="subcellular location">
    <subcellularLocation>
        <location evidence="1">Periplasm</location>
    </subcellularLocation>
</comment>
<comment type="similarity">
    <text evidence="1">Belongs to the peptidase M74 family.</text>
</comment>
<proteinExistence type="inferred from homology"/>
<sequence>MKKTVIALLAWFVSSASLAATPWQKITHPVPGAAQSIGSFANGCIIGADTLPVQSDNYQVMRTDQRRYFGHPDLVMFIQRLSHQAQQRRLGTVLIGDMGMPAGGRFNGGHASHQTGLDVDIFLQLPKTRWSQAQLLRPQALDLVSRDGKHVVPSRWSSDIASLIKLAAQDNDVTRIFVNPAIKQQLCLDAGSDRDWLRKVRPWFQHRAHMHVRLRCPADSLECEDQPLPPPGDGCGAELQSWFEPPKPGTTKPEKKTPPPLPPSCQALLDEHVL</sequence>
<accession>C0PZY1</accession>
<protein>
    <recommendedName>
        <fullName evidence="1">Penicillin-insensitive murein endopeptidase</fullName>
        <ecNumber evidence="1">3.4.24.-</ecNumber>
    </recommendedName>
    <alternativeName>
        <fullName evidence="1">D-alanyl-D-alanine-endopeptidase</fullName>
        <shortName evidence="1">DD-endopeptidase</shortName>
    </alternativeName>
</protein>
<dbReference type="EC" id="3.4.24.-" evidence="1"/>
<dbReference type="EMBL" id="CP000857">
    <property type="protein sequence ID" value="ACN45485.1"/>
    <property type="molecule type" value="Genomic_DNA"/>
</dbReference>
<dbReference type="RefSeq" id="WP_000754362.1">
    <property type="nucleotide sequence ID" value="NC_012125.1"/>
</dbReference>
<dbReference type="SMR" id="C0PZY1"/>
<dbReference type="MEROPS" id="M74.001"/>
<dbReference type="KEGG" id="sei:SPC_1322"/>
<dbReference type="HOGENOM" id="CLU_052496_0_0_6"/>
<dbReference type="Proteomes" id="UP000001599">
    <property type="component" value="Chromosome"/>
</dbReference>
<dbReference type="GO" id="GO:0030288">
    <property type="term" value="C:outer membrane-bounded periplasmic space"/>
    <property type="evidence" value="ECO:0007669"/>
    <property type="project" value="InterPro"/>
</dbReference>
<dbReference type="GO" id="GO:0046872">
    <property type="term" value="F:metal ion binding"/>
    <property type="evidence" value="ECO:0007669"/>
    <property type="project" value="UniProtKB-KW"/>
</dbReference>
<dbReference type="GO" id="GO:0004222">
    <property type="term" value="F:metalloendopeptidase activity"/>
    <property type="evidence" value="ECO:0007669"/>
    <property type="project" value="UniProtKB-UniRule"/>
</dbReference>
<dbReference type="GO" id="GO:0004252">
    <property type="term" value="F:serine-type endopeptidase activity"/>
    <property type="evidence" value="ECO:0007669"/>
    <property type="project" value="InterPro"/>
</dbReference>
<dbReference type="GO" id="GO:0000270">
    <property type="term" value="P:peptidoglycan metabolic process"/>
    <property type="evidence" value="ECO:0007669"/>
    <property type="project" value="UniProtKB-UniRule"/>
</dbReference>
<dbReference type="GO" id="GO:0006508">
    <property type="term" value="P:proteolysis"/>
    <property type="evidence" value="ECO:0007669"/>
    <property type="project" value="UniProtKB-KW"/>
</dbReference>
<dbReference type="FunFam" id="3.30.1380.10:FF:000002">
    <property type="entry name" value="Penicillin-insensitive murein endopeptidase"/>
    <property type="match status" value="1"/>
</dbReference>
<dbReference type="Gene3D" id="3.30.1380.10">
    <property type="match status" value="1"/>
</dbReference>
<dbReference type="HAMAP" id="MF_01623">
    <property type="entry name" value="MepA"/>
    <property type="match status" value="1"/>
</dbReference>
<dbReference type="InterPro" id="IPR009045">
    <property type="entry name" value="Hedgehog_sig/DD-Pept_Zn-bd_sf"/>
</dbReference>
<dbReference type="InterPro" id="IPR005073">
    <property type="entry name" value="Peptidase_M74"/>
</dbReference>
<dbReference type="NCBIfam" id="NF006947">
    <property type="entry name" value="PRK09429.1"/>
    <property type="match status" value="1"/>
</dbReference>
<dbReference type="Pfam" id="PF03411">
    <property type="entry name" value="Peptidase_M74"/>
    <property type="match status" value="1"/>
</dbReference>
<dbReference type="PIRSF" id="PIRSF018455">
    <property type="entry name" value="MepA"/>
    <property type="match status" value="1"/>
</dbReference>
<dbReference type="SUPFAM" id="SSF55166">
    <property type="entry name" value="Hedgehog/DD-peptidase"/>
    <property type="match status" value="1"/>
</dbReference>
<name>MEPA_SALPC</name>
<reference key="1">
    <citation type="journal article" date="2009" name="PLoS ONE">
        <title>Salmonella paratyphi C: genetic divergence from Salmonella choleraesuis and pathogenic convergence with Salmonella typhi.</title>
        <authorList>
            <person name="Liu W.-Q."/>
            <person name="Feng Y."/>
            <person name="Wang Y."/>
            <person name="Zou Q.-H."/>
            <person name="Chen F."/>
            <person name="Guo J.-T."/>
            <person name="Peng Y.-H."/>
            <person name="Jin Y."/>
            <person name="Li Y.-G."/>
            <person name="Hu S.-N."/>
            <person name="Johnston R.N."/>
            <person name="Liu G.-R."/>
            <person name="Liu S.-L."/>
        </authorList>
    </citation>
    <scope>NUCLEOTIDE SEQUENCE [LARGE SCALE GENOMIC DNA]</scope>
    <source>
        <strain>RKS4594</strain>
    </source>
</reference>